<name>RS17_LACE2</name>
<sequence length="85" mass="10018">MEERNLRKTRTGKVISNKMDKTIVVAVQDNVKHPLYNKIVKRTYKLKAHDENNECLIGDVVKVMETRPLSKDKRWRLVEIISRAK</sequence>
<accession>C4Z2T9</accession>
<organism>
    <name type="scientific">Lachnospira eligens (strain ATCC 27750 / DSM 3376 / VPI C15-48 / C15-B4)</name>
    <name type="common">Eubacterium eligens</name>
    <dbReference type="NCBI Taxonomy" id="515620"/>
    <lineage>
        <taxon>Bacteria</taxon>
        <taxon>Bacillati</taxon>
        <taxon>Bacillota</taxon>
        <taxon>Clostridia</taxon>
        <taxon>Lachnospirales</taxon>
        <taxon>Lachnospiraceae</taxon>
        <taxon>Lachnospira</taxon>
    </lineage>
</organism>
<reference key="1">
    <citation type="journal article" date="2009" name="Proc. Natl. Acad. Sci. U.S.A.">
        <title>Characterizing a model human gut microbiota composed of members of its two dominant bacterial phyla.</title>
        <authorList>
            <person name="Mahowald M.A."/>
            <person name="Rey F.E."/>
            <person name="Seedorf H."/>
            <person name="Turnbaugh P.J."/>
            <person name="Fulton R.S."/>
            <person name="Wollam A."/>
            <person name="Shah N."/>
            <person name="Wang C."/>
            <person name="Magrini V."/>
            <person name="Wilson R.K."/>
            <person name="Cantarel B.L."/>
            <person name="Coutinho P.M."/>
            <person name="Henrissat B."/>
            <person name="Crock L.W."/>
            <person name="Russell A."/>
            <person name="Verberkmoes N.C."/>
            <person name="Hettich R.L."/>
            <person name="Gordon J.I."/>
        </authorList>
    </citation>
    <scope>NUCLEOTIDE SEQUENCE [LARGE SCALE GENOMIC DNA]</scope>
    <source>
        <strain>ATCC 27750 / DSM 3376 / VPI C15-48 / C15-B4</strain>
    </source>
</reference>
<gene>
    <name evidence="1" type="primary">rpsQ</name>
    <name type="ordered locus">EUBELI_00308</name>
</gene>
<evidence type="ECO:0000255" key="1">
    <source>
        <dbReference type="HAMAP-Rule" id="MF_01345"/>
    </source>
</evidence>
<evidence type="ECO:0000305" key="2"/>
<dbReference type="EMBL" id="CP001104">
    <property type="protein sequence ID" value="ACR71344.1"/>
    <property type="molecule type" value="Genomic_DNA"/>
</dbReference>
<dbReference type="RefSeq" id="WP_012738581.1">
    <property type="nucleotide sequence ID" value="NC_012778.1"/>
</dbReference>
<dbReference type="SMR" id="C4Z2T9"/>
<dbReference type="STRING" id="515620.EUBELI_00308"/>
<dbReference type="GeneID" id="41355081"/>
<dbReference type="KEGG" id="eel:EUBELI_00308"/>
<dbReference type="eggNOG" id="COG0186">
    <property type="taxonomic scope" value="Bacteria"/>
</dbReference>
<dbReference type="HOGENOM" id="CLU_073626_1_0_9"/>
<dbReference type="Proteomes" id="UP000001476">
    <property type="component" value="Chromosome"/>
</dbReference>
<dbReference type="GO" id="GO:0022627">
    <property type="term" value="C:cytosolic small ribosomal subunit"/>
    <property type="evidence" value="ECO:0007669"/>
    <property type="project" value="TreeGrafter"/>
</dbReference>
<dbReference type="GO" id="GO:0019843">
    <property type="term" value="F:rRNA binding"/>
    <property type="evidence" value="ECO:0007669"/>
    <property type="project" value="UniProtKB-UniRule"/>
</dbReference>
<dbReference type="GO" id="GO:0003735">
    <property type="term" value="F:structural constituent of ribosome"/>
    <property type="evidence" value="ECO:0007669"/>
    <property type="project" value="InterPro"/>
</dbReference>
<dbReference type="GO" id="GO:0006412">
    <property type="term" value="P:translation"/>
    <property type="evidence" value="ECO:0007669"/>
    <property type="project" value="UniProtKB-UniRule"/>
</dbReference>
<dbReference type="CDD" id="cd00364">
    <property type="entry name" value="Ribosomal_uS17"/>
    <property type="match status" value="1"/>
</dbReference>
<dbReference type="FunFam" id="2.40.50.140:FF:000123">
    <property type="entry name" value="30S ribosomal protein S17"/>
    <property type="match status" value="1"/>
</dbReference>
<dbReference type="Gene3D" id="2.40.50.140">
    <property type="entry name" value="Nucleic acid-binding proteins"/>
    <property type="match status" value="1"/>
</dbReference>
<dbReference type="HAMAP" id="MF_01345_B">
    <property type="entry name" value="Ribosomal_uS17_B"/>
    <property type="match status" value="1"/>
</dbReference>
<dbReference type="InterPro" id="IPR012340">
    <property type="entry name" value="NA-bd_OB-fold"/>
</dbReference>
<dbReference type="InterPro" id="IPR000266">
    <property type="entry name" value="Ribosomal_uS17"/>
</dbReference>
<dbReference type="InterPro" id="IPR019984">
    <property type="entry name" value="Ribosomal_uS17_bact/chlr"/>
</dbReference>
<dbReference type="InterPro" id="IPR019979">
    <property type="entry name" value="Ribosomal_uS17_CS"/>
</dbReference>
<dbReference type="NCBIfam" id="NF004123">
    <property type="entry name" value="PRK05610.1"/>
    <property type="match status" value="1"/>
</dbReference>
<dbReference type="NCBIfam" id="TIGR03635">
    <property type="entry name" value="uS17_bact"/>
    <property type="match status" value="1"/>
</dbReference>
<dbReference type="PANTHER" id="PTHR10744">
    <property type="entry name" value="40S RIBOSOMAL PROTEIN S11 FAMILY MEMBER"/>
    <property type="match status" value="1"/>
</dbReference>
<dbReference type="PANTHER" id="PTHR10744:SF1">
    <property type="entry name" value="SMALL RIBOSOMAL SUBUNIT PROTEIN US17M"/>
    <property type="match status" value="1"/>
</dbReference>
<dbReference type="Pfam" id="PF00366">
    <property type="entry name" value="Ribosomal_S17"/>
    <property type="match status" value="1"/>
</dbReference>
<dbReference type="PRINTS" id="PR00973">
    <property type="entry name" value="RIBOSOMALS17"/>
</dbReference>
<dbReference type="SUPFAM" id="SSF50249">
    <property type="entry name" value="Nucleic acid-binding proteins"/>
    <property type="match status" value="1"/>
</dbReference>
<dbReference type="PROSITE" id="PS00056">
    <property type="entry name" value="RIBOSOMAL_S17"/>
    <property type="match status" value="1"/>
</dbReference>
<feature type="chain" id="PRO_1000214782" description="Small ribosomal subunit protein uS17">
    <location>
        <begin position="1"/>
        <end position="85"/>
    </location>
</feature>
<comment type="function">
    <text evidence="1">One of the primary rRNA binding proteins, it binds specifically to the 5'-end of 16S ribosomal RNA.</text>
</comment>
<comment type="subunit">
    <text evidence="1">Part of the 30S ribosomal subunit.</text>
</comment>
<comment type="similarity">
    <text evidence="1">Belongs to the universal ribosomal protein uS17 family.</text>
</comment>
<proteinExistence type="inferred from homology"/>
<keyword id="KW-1185">Reference proteome</keyword>
<keyword id="KW-0687">Ribonucleoprotein</keyword>
<keyword id="KW-0689">Ribosomal protein</keyword>
<keyword id="KW-0694">RNA-binding</keyword>
<keyword id="KW-0699">rRNA-binding</keyword>
<protein>
    <recommendedName>
        <fullName evidence="1">Small ribosomal subunit protein uS17</fullName>
    </recommendedName>
    <alternativeName>
        <fullName evidence="2">30S ribosomal protein S17</fullName>
    </alternativeName>
</protein>